<organism>
    <name type="scientific">Homo sapiens</name>
    <name type="common">Human</name>
    <dbReference type="NCBI Taxonomy" id="9606"/>
    <lineage>
        <taxon>Eukaryota</taxon>
        <taxon>Metazoa</taxon>
        <taxon>Chordata</taxon>
        <taxon>Craniata</taxon>
        <taxon>Vertebrata</taxon>
        <taxon>Euteleostomi</taxon>
        <taxon>Mammalia</taxon>
        <taxon>Eutheria</taxon>
        <taxon>Euarchontoglires</taxon>
        <taxon>Primates</taxon>
        <taxon>Haplorrhini</taxon>
        <taxon>Catarrhini</taxon>
        <taxon>Hominidae</taxon>
        <taxon>Homo</taxon>
    </lineage>
</organism>
<evidence type="ECO:0000250" key="1">
    <source>
        <dbReference type="UniProtKB" id="P23527"/>
    </source>
</evidence>
<evidence type="ECO:0000250" key="2">
    <source>
        <dbReference type="UniProtKB" id="P33778"/>
    </source>
</evidence>
<evidence type="ECO:0000250" key="3">
    <source>
        <dbReference type="UniProtKB" id="P62807"/>
    </source>
</evidence>
<evidence type="ECO:0000250" key="4">
    <source>
        <dbReference type="UniProtKB" id="Q00729"/>
    </source>
</evidence>
<evidence type="ECO:0000250" key="5">
    <source>
        <dbReference type="UniProtKB" id="Q5QNW6"/>
    </source>
</evidence>
<evidence type="ECO:0000250" key="6">
    <source>
        <dbReference type="UniProtKB" id="Q64475"/>
    </source>
</evidence>
<evidence type="ECO:0000250" key="7">
    <source>
        <dbReference type="UniProtKB" id="Q6ZWY9"/>
    </source>
</evidence>
<evidence type="ECO:0000250" key="8">
    <source>
        <dbReference type="UniProtKB" id="Q96A08"/>
    </source>
</evidence>
<evidence type="ECO:0000256" key="9">
    <source>
        <dbReference type="SAM" id="MobiDB-lite"/>
    </source>
</evidence>
<evidence type="ECO:0000269" key="10">
    <source>
    </source>
</evidence>
<evidence type="ECO:0000269" key="11">
    <source>
    </source>
</evidence>
<evidence type="ECO:0000269" key="12">
    <source>
    </source>
</evidence>
<evidence type="ECO:0000269" key="13">
    <source>
    </source>
</evidence>
<evidence type="ECO:0000269" key="14">
    <source>
    </source>
</evidence>
<evidence type="ECO:0000269" key="15">
    <source>
    </source>
</evidence>
<evidence type="ECO:0000269" key="16">
    <source>
    </source>
</evidence>
<evidence type="ECO:0000269" key="17">
    <source>
    </source>
</evidence>
<evidence type="ECO:0000269" key="18">
    <source>
    </source>
</evidence>
<evidence type="ECO:0000269" key="19">
    <source>
    </source>
</evidence>
<evidence type="ECO:0000269" key="20">
    <source>
    </source>
</evidence>
<evidence type="ECO:0000269" key="21">
    <source>
    </source>
</evidence>
<evidence type="ECO:0000269" key="22">
    <source>
    </source>
</evidence>
<evidence type="ECO:0000269" key="23">
    <source>
    </source>
</evidence>
<evidence type="ECO:0000269" key="24">
    <source>
    </source>
</evidence>
<evidence type="ECO:0000269" key="25">
    <source>
    </source>
</evidence>
<evidence type="ECO:0000305" key="26"/>
<evidence type="ECO:0000312" key="27">
    <source>
        <dbReference type="HGNC" id="HGNC:4747"/>
    </source>
</evidence>
<evidence type="ECO:0007744" key="28">
    <source>
    </source>
</evidence>
<evidence type="ECO:0007744" key="29">
    <source>
    </source>
</evidence>
<evidence type="ECO:0007744" key="30">
    <source>
    </source>
</evidence>
<keyword id="KW-0007">Acetylation</keyword>
<keyword id="KW-0013">ADP-ribosylation</keyword>
<keyword id="KW-0158">Chromosome</keyword>
<keyword id="KW-0903">Direct protein sequencing</keyword>
<keyword id="KW-0238">DNA-binding</keyword>
<keyword id="KW-0325">Glycoprotein</keyword>
<keyword id="KW-0379">Hydroxylation</keyword>
<keyword id="KW-1017">Isopeptide bond</keyword>
<keyword id="KW-0488">Methylation</keyword>
<keyword id="KW-0544">Nucleosome core</keyword>
<keyword id="KW-0539">Nucleus</keyword>
<keyword id="KW-0597">Phosphoprotein</keyword>
<keyword id="KW-1267">Proteomics identification</keyword>
<keyword id="KW-1185">Reference proteome</keyword>
<keyword id="KW-0832">Ubl conjugation</keyword>
<accession>P58876</accession>
<comment type="function">
    <text>Core component of nucleosome. Nucleosomes wrap and compact DNA into chromatin, limiting DNA accessibility to the cellular machineries which require DNA as a template. Histones thereby play a central role in transcription regulation, DNA repair, DNA replication and chromosomal stability. DNA accessibility is regulated via a complex set of post-translational modifications of histones, also called histone code, and nucleosome remodeling.</text>
</comment>
<comment type="subunit">
    <text>The nucleosome is a histone octamer containing two molecules each of H2A, H2B, H3 and H4 assembled in one H3-H4 heterotetramer and two H2A-H2B heterodimers. The octamer wraps approximately 147 bp of DNA.</text>
</comment>
<comment type="interaction">
    <interactant intactId="EBI-4409942">
        <id>P58876</id>
    </interactant>
    <interactant intactId="EBI-494830">
        <id>P16104</id>
        <label>H2AX</label>
    </interactant>
    <organismsDiffer>false</organismsDiffer>
    <experiments>3</experiments>
</comment>
<comment type="interaction">
    <interactant intactId="EBI-4409942">
        <id>P58876</id>
    </interactant>
    <interactant intactId="EBI-1199859">
        <id>P0C0S5</id>
        <label>H2AZ1</label>
    </interactant>
    <organismsDiffer>false</organismsDiffer>
    <experiments>4</experiments>
</comment>
<comment type="subcellular location">
    <subcellularLocation>
        <location>Nucleus</location>
    </subcellularLocation>
    <subcellularLocation>
        <location>Chromosome</location>
    </subcellularLocation>
</comment>
<comment type="PTM">
    <text evidence="13">Monoubiquitination at Lys-35 (H2BK34Ub) by the MSL1/MSL2 dimer is required for histone H3 'Lys-4' (H3K4me) and 'Lys-79' (H3K79me) methylation and transcription activation at specific gene loci, such as HOXA9 and MEIS1 loci. Similarly, monoubiquitination at Lys-121 (H2BK120Ub) by the RNF20/40 complex gives a specific tag for epigenetic transcriptional activation and is also prerequisite for histone H3 'Lys-4' and 'Lys-79' methylation. It also functions cooperatively with the FACT dimer to stimulate elongation by RNA polymerase II. H2BK120Ub also acts as a regulator of mRNA splicing: deubiquitination by USP49 is required for efficient cotranscriptional splicing of a large set of exons.</text>
</comment>
<comment type="PTM">
    <text evidence="6 10">Phosphorylation at Ser-37 (H2BS36ph) by AMPK in response to stress promotes transcription (By similarity). Phosphorylated on Ser-15 (H2BS14ph) by STK4/MST1 during apoptosis; which facilitates apoptotic chromatin condensation (PubMed:12757711). Also phosphorylated on Ser-15 in response to DNA double strand breaks (DSBs), and in correlation with somatic hypermutation and immunoglobulin class-switch recombination.</text>
</comment>
<comment type="PTM">
    <text evidence="3">GlcNAcylation at Ser-113 promotes monoubiquitination of Lys-121. It fluctuates in response to extracellular glucose, and associates with transcribed genes (By similarity).</text>
</comment>
<comment type="PTM">
    <text evidence="7 21 22 25">ADP-ribosylated by PARP1 or PARP2 on Ser-7 (H2BS6ADPr) in response to DNA damage (PubMed:27723750, PubMed:34874266). H2BS6ADPr promotes recruitment of CHD1L (PubMed:34874266). Mono-ADP-ribosylated on Glu-3 (H2BE2ADPr) by PARP3 in response to single-strand breaks (PubMed:27530147). Poly ADP-ribosylation on Glu-36 (H2BE35ADPr) by PARP1 regulates adipogenesis: it inhibits phosphorylation at Ser-37 (H2BS36ph), thereby blocking expression of pro-adipogenetic genes (By similarity).</text>
</comment>
<comment type="PTM">
    <text evidence="16">Crotonylation (Kcr) is specifically present in male germ cells and marks testis-specific genes in post-meiotic cells, including X-linked genes that escape sex chromosome inactivation in haploid cells. Crotonylation marks active promoters and enhancers and confers resistance to transcriptional repressors. It is also associated with post-meiotically activated genes on autosomes.</text>
</comment>
<comment type="PTM">
    <text evidence="24">Lactylated in macrophages by EP300/P300 by using lactoyl-CoA directly derived from endogenous or exogenous lactate, leading to stimulates gene transcription.</text>
</comment>
<comment type="miscellaneous">
    <text>The mouse orthologous protein seems not to exist.</text>
</comment>
<comment type="similarity">
    <text evidence="26">Belongs to the histone H2B family.</text>
</comment>
<gene>
    <name evidence="27" type="primary">H2BC5</name>
    <name type="synonym">H2BFB</name>
    <name type="synonym">HIRIP2</name>
    <name evidence="27" type="synonym">HIST1H2BD</name>
</gene>
<reference key="1">
    <citation type="journal article" date="1998" name="Mol. Cell. Biol.">
        <title>Core histones and HIRIP3, a novel histone-binding protein, directly interact with WD repeat protein HIRA.</title>
        <authorList>
            <person name="Lorain S."/>
            <person name="Quivy J.-P."/>
            <person name="Monier-Gavelle F."/>
            <person name="Scamps C."/>
            <person name="Lecluse Y."/>
            <person name="Almouzni G."/>
            <person name="Lipinski M."/>
        </authorList>
    </citation>
    <scope>NUCLEOTIDE SEQUENCE [MRNA]</scope>
    <scope>INTERACTION WITH HIRA</scope>
    <source>
        <tissue>Cervix carcinoma</tissue>
    </source>
</reference>
<reference key="2">
    <citation type="journal article" date="1991" name="Genomics">
        <title>Isolation and characterization of two human H1 histone genes within clusters of core histone genes.</title>
        <authorList>
            <person name="Albig W."/>
            <person name="Kardalinou E."/>
            <person name="Drabent B."/>
            <person name="Zimmer A."/>
            <person name="Doenecke D."/>
        </authorList>
    </citation>
    <scope>NUCLEOTIDE SEQUENCE [GENOMIC DNA]</scope>
    <source>
        <tissue>Blood</tissue>
    </source>
</reference>
<reference key="3">
    <citation type="journal article" date="2002" name="Genomics">
        <title>The human and mouse replication-dependent histone genes.</title>
        <authorList>
            <person name="Marzluff W.F."/>
            <person name="Gongidi P."/>
            <person name="Woods K.R."/>
            <person name="Jin J."/>
            <person name="Maltais L.J."/>
        </authorList>
    </citation>
    <scope>NUCLEOTIDE SEQUENCE [GENOMIC DNA]</scope>
</reference>
<reference key="4">
    <citation type="journal article" date="2003" name="Nature">
        <title>The DNA sequence and analysis of human chromosome 6.</title>
        <authorList>
            <person name="Mungall A.J."/>
            <person name="Palmer S.A."/>
            <person name="Sims S.K."/>
            <person name="Edwards C.A."/>
            <person name="Ashurst J.L."/>
            <person name="Wilming L."/>
            <person name="Jones M.C."/>
            <person name="Horton R."/>
            <person name="Hunt S.E."/>
            <person name="Scott C.E."/>
            <person name="Gilbert J.G.R."/>
            <person name="Clamp M.E."/>
            <person name="Bethel G."/>
            <person name="Milne S."/>
            <person name="Ainscough R."/>
            <person name="Almeida J.P."/>
            <person name="Ambrose K.D."/>
            <person name="Andrews T.D."/>
            <person name="Ashwell R.I.S."/>
            <person name="Babbage A.K."/>
            <person name="Bagguley C.L."/>
            <person name="Bailey J."/>
            <person name="Banerjee R."/>
            <person name="Barker D.J."/>
            <person name="Barlow K.F."/>
            <person name="Bates K."/>
            <person name="Beare D.M."/>
            <person name="Beasley H."/>
            <person name="Beasley O."/>
            <person name="Bird C.P."/>
            <person name="Blakey S.E."/>
            <person name="Bray-Allen S."/>
            <person name="Brook J."/>
            <person name="Brown A.J."/>
            <person name="Brown J.Y."/>
            <person name="Burford D.C."/>
            <person name="Burrill W."/>
            <person name="Burton J."/>
            <person name="Carder C."/>
            <person name="Carter N.P."/>
            <person name="Chapman J.C."/>
            <person name="Clark S.Y."/>
            <person name="Clark G."/>
            <person name="Clee C.M."/>
            <person name="Clegg S."/>
            <person name="Cobley V."/>
            <person name="Collier R.E."/>
            <person name="Collins J.E."/>
            <person name="Colman L.K."/>
            <person name="Corby N.R."/>
            <person name="Coville G.J."/>
            <person name="Culley K.M."/>
            <person name="Dhami P."/>
            <person name="Davies J."/>
            <person name="Dunn M."/>
            <person name="Earthrowl M.E."/>
            <person name="Ellington A.E."/>
            <person name="Evans K.A."/>
            <person name="Faulkner L."/>
            <person name="Francis M.D."/>
            <person name="Frankish A."/>
            <person name="Frankland J."/>
            <person name="French L."/>
            <person name="Garner P."/>
            <person name="Garnett J."/>
            <person name="Ghori M.J."/>
            <person name="Gilby L.M."/>
            <person name="Gillson C.J."/>
            <person name="Glithero R.J."/>
            <person name="Grafham D.V."/>
            <person name="Grant M."/>
            <person name="Gribble S."/>
            <person name="Griffiths C."/>
            <person name="Griffiths M.N.D."/>
            <person name="Hall R."/>
            <person name="Halls K.S."/>
            <person name="Hammond S."/>
            <person name="Harley J.L."/>
            <person name="Hart E.A."/>
            <person name="Heath P.D."/>
            <person name="Heathcott R."/>
            <person name="Holmes S.J."/>
            <person name="Howden P.J."/>
            <person name="Howe K.L."/>
            <person name="Howell G.R."/>
            <person name="Huckle E."/>
            <person name="Humphray S.J."/>
            <person name="Humphries M.D."/>
            <person name="Hunt A.R."/>
            <person name="Johnson C.M."/>
            <person name="Joy A.A."/>
            <person name="Kay M."/>
            <person name="Keenan S.J."/>
            <person name="Kimberley A.M."/>
            <person name="King A."/>
            <person name="Laird G.K."/>
            <person name="Langford C."/>
            <person name="Lawlor S."/>
            <person name="Leongamornlert D.A."/>
            <person name="Leversha M."/>
            <person name="Lloyd C.R."/>
            <person name="Lloyd D.M."/>
            <person name="Loveland J.E."/>
            <person name="Lovell J."/>
            <person name="Martin S."/>
            <person name="Mashreghi-Mohammadi M."/>
            <person name="Maslen G.L."/>
            <person name="Matthews L."/>
            <person name="McCann O.T."/>
            <person name="McLaren S.J."/>
            <person name="McLay K."/>
            <person name="McMurray A."/>
            <person name="Moore M.J.F."/>
            <person name="Mullikin J.C."/>
            <person name="Niblett D."/>
            <person name="Nickerson T."/>
            <person name="Novik K.L."/>
            <person name="Oliver K."/>
            <person name="Overton-Larty E.K."/>
            <person name="Parker A."/>
            <person name="Patel R."/>
            <person name="Pearce A.V."/>
            <person name="Peck A.I."/>
            <person name="Phillimore B.J.C.T."/>
            <person name="Phillips S."/>
            <person name="Plumb R.W."/>
            <person name="Porter K.M."/>
            <person name="Ramsey Y."/>
            <person name="Ranby S.A."/>
            <person name="Rice C.M."/>
            <person name="Ross M.T."/>
            <person name="Searle S.M."/>
            <person name="Sehra H.K."/>
            <person name="Sheridan E."/>
            <person name="Skuce C.D."/>
            <person name="Smith S."/>
            <person name="Smith M."/>
            <person name="Spraggon L."/>
            <person name="Squares S.L."/>
            <person name="Steward C.A."/>
            <person name="Sycamore N."/>
            <person name="Tamlyn-Hall G."/>
            <person name="Tester J."/>
            <person name="Theaker A.J."/>
            <person name="Thomas D.W."/>
            <person name="Thorpe A."/>
            <person name="Tracey A."/>
            <person name="Tromans A."/>
            <person name="Tubby B."/>
            <person name="Wall M."/>
            <person name="Wallis J.M."/>
            <person name="West A.P."/>
            <person name="White S.S."/>
            <person name="Whitehead S.L."/>
            <person name="Whittaker H."/>
            <person name="Wild A."/>
            <person name="Willey D.J."/>
            <person name="Wilmer T.E."/>
            <person name="Wood J.M."/>
            <person name="Wray P.W."/>
            <person name="Wyatt J.C."/>
            <person name="Young L."/>
            <person name="Younger R.M."/>
            <person name="Bentley D.R."/>
            <person name="Coulson A."/>
            <person name="Durbin R.M."/>
            <person name="Hubbard T."/>
            <person name="Sulston J.E."/>
            <person name="Dunham I."/>
            <person name="Rogers J."/>
            <person name="Beck S."/>
        </authorList>
    </citation>
    <scope>NUCLEOTIDE SEQUENCE [LARGE SCALE GENOMIC DNA]</scope>
</reference>
<reference key="5">
    <citation type="journal article" date="2004" name="Genome Res.">
        <title>The status, quality, and expansion of the NIH full-length cDNA project: the Mammalian Gene Collection (MGC).</title>
        <authorList>
            <consortium name="The MGC Project Team"/>
        </authorList>
    </citation>
    <scope>NUCLEOTIDE SEQUENCE [LARGE SCALE MRNA]</scope>
    <source>
        <tissue>Uterus</tissue>
    </source>
</reference>
<reference key="6">
    <citation type="journal article" date="2006" name="Mol. Cell. Proteomics">
        <title>Quantitative proteomic analysis of post-translational modifications of human histones.</title>
        <authorList>
            <person name="Beck H.C."/>
            <person name="Nielsen E.C."/>
            <person name="Matthiesen R."/>
            <person name="Jensen L.H."/>
            <person name="Sehested M."/>
            <person name="Finn P."/>
            <person name="Grauslund M."/>
            <person name="Hansen A.M."/>
            <person name="Jensen O.N."/>
        </authorList>
    </citation>
    <scope>PROTEIN SEQUENCE OF 7-24</scope>
    <scope>ACETYLATION AT LYS-6; LYS-12; LYS-13; LYS-16; LYS-17 AND LYS-21</scope>
    <scope>METHYLATION AT LYS-47; LYS-58 AND LYS-109</scope>
    <scope>UBIQUITINATION AT LYS-121</scope>
    <scope>IDENTIFICATION BY MASS SPECTROMETRY</scope>
</reference>
<reference key="7">
    <citation type="journal article" date="2003" name="Cell">
        <title>Apoptotic phosphorylation of histone H2B is mediated by mammalian sterile twenty kinase.</title>
        <authorList>
            <person name="Cheung W.L."/>
            <person name="Ajiro K."/>
            <person name="Samejima K."/>
            <person name="Kloc M."/>
            <person name="Cheung P."/>
            <person name="Mizzen C.A."/>
            <person name="Beeser A."/>
            <person name="Etkin L.D."/>
            <person name="Chernoff J."/>
            <person name="Earnshaw W.C."/>
            <person name="Allis C.D."/>
        </authorList>
    </citation>
    <scope>PHOSPHORYLATION AT SER-15</scope>
</reference>
<reference key="8">
    <citation type="journal article" date="2005" name="Mol. Cell">
        <title>Monoubiquitination of human histone H2B: the factors involved and their roles in HOX gene regulation.</title>
        <authorList>
            <person name="Zhu B."/>
            <person name="Zheng Y."/>
            <person name="Pham A.-D."/>
            <person name="Mandal S.S."/>
            <person name="Erdjument-Bromage H."/>
            <person name="Tempst P."/>
            <person name="Reinberg D."/>
        </authorList>
    </citation>
    <scope>UBIQUITINATION AT LYS-121</scope>
</reference>
<reference key="9">
    <citation type="journal article" date="2005" name="Mol. Cell. Biochem.">
        <title>Inhibition of core histones acetylation by carcinogenic nickel(II).</title>
        <authorList>
            <person name="Golebiowski F."/>
            <person name="Kasprzak K.S."/>
        </authorList>
    </citation>
    <scope>ACETYLATION AT LYS-6; LYS-13; LYS-16 AND LYS-21</scope>
</reference>
<reference key="10">
    <citation type="journal article" date="2006" name="Cell">
        <title>Histone H2B monoubiquitination functions cooperatively with FACT to regulate elongation by RNA polymerase II.</title>
        <authorList>
            <person name="Pavri R."/>
            <person name="Zhu B."/>
            <person name="Li G."/>
            <person name="Trojer P."/>
            <person name="Mandal S."/>
            <person name="Shilatifard A."/>
            <person name="Reinberg D."/>
        </authorList>
    </citation>
    <scope>UBIQUITINATION AT LYS-121</scope>
</reference>
<reference key="11">
    <citation type="journal article" date="2006" name="J. Proteome Res.">
        <title>Gene-specific characterization of human histone H2B by electron capture dissociation.</title>
        <authorList>
            <person name="Siuti N."/>
            <person name="Roth M.J."/>
            <person name="Mizzen C.A."/>
            <person name="Kelleher N.L."/>
            <person name="Pesavento J.J."/>
        </authorList>
    </citation>
    <scope>IDENTIFICATION BY MASS SPECTROMETRY</scope>
</reference>
<reference key="12">
    <citation type="journal article" date="2006" name="Mol. Cell. Proteomics">
        <title>Characterization of histones H2A and H2B variants and their post-translational modifications by mass spectrometry.</title>
        <authorList>
            <person name="Bonenfant D."/>
            <person name="Coulot M."/>
            <person name="Towbin H."/>
            <person name="Schindler P."/>
            <person name="van Oostrum J."/>
        </authorList>
    </citation>
    <scope>IDENTIFICATION BY MASS SPECTROMETRY [LARGE SCALE ANALYSIS]</scope>
</reference>
<reference key="13">
    <citation type="journal article" date="2009" name="Science">
        <title>Lysine acetylation targets protein complexes and co-regulates major cellular functions.</title>
        <authorList>
            <person name="Choudhary C."/>
            <person name="Kumar C."/>
            <person name="Gnad F."/>
            <person name="Nielsen M.L."/>
            <person name="Rehman M."/>
            <person name="Walther T.C."/>
            <person name="Olsen J.V."/>
            <person name="Mann M."/>
        </authorList>
    </citation>
    <scope>ACETYLATION [LARGE SCALE ANALYSIS] AT LYS-6</scope>
    <scope>IDENTIFICATION BY MASS SPECTROMETRY [LARGE SCALE ANALYSIS]</scope>
</reference>
<reference key="14">
    <citation type="journal article" date="2011" name="Cell">
        <title>Identification of 67 histone marks and histone lysine crotonylation as a new type of histone modification.</title>
        <authorList>
            <person name="Tan M."/>
            <person name="Luo H."/>
            <person name="Lee S."/>
            <person name="Jin F."/>
            <person name="Yang J.S."/>
            <person name="Montellier E."/>
            <person name="Buchou T."/>
            <person name="Cheng Z."/>
            <person name="Rousseaux S."/>
            <person name="Rajagopal N."/>
            <person name="Lu Z."/>
            <person name="Ye Z."/>
            <person name="Zhu Q."/>
            <person name="Wysocka J."/>
            <person name="Ye Y."/>
            <person name="Khochbin S."/>
            <person name="Ren B."/>
            <person name="Zhao Y."/>
        </authorList>
    </citation>
    <scope>CROTONYLATION AT LYS-6; LYS-12; LYS-13; LYS-16; LYS-17; LYS-21; LYS-24 AND LYS-35</scope>
</reference>
<reference key="15">
    <citation type="journal article" date="2011" name="Mol. Cell">
        <title>The RING finger protein MSL2 in the MOF complex is an E3 ubiquitin ligase for H2B K34 and is involved in crosstalk with H3 K4 and K79 methylation.</title>
        <authorList>
            <person name="Wu L."/>
            <person name="Zee B.M."/>
            <person name="Wang Y."/>
            <person name="Garcia B.A."/>
            <person name="Dou Y."/>
        </authorList>
    </citation>
    <scope>UBIQUITINATION AT LYS-35</scope>
</reference>
<reference key="16">
    <citation type="journal article" date="2012" name="Mol. Cell. Proteomics">
        <title>Lysine succinylation and lysine malonylation in histones.</title>
        <authorList>
            <person name="Xie Z."/>
            <person name="Dai J."/>
            <person name="Dai L."/>
            <person name="Tan M."/>
            <person name="Cheng Z."/>
            <person name="Wu Y."/>
            <person name="Boeke J.D."/>
            <person name="Zhao Y."/>
        </authorList>
    </citation>
    <scope>SUCCINYLATION AT LYS-35; LYS-117 AND LYS-121</scope>
    <scope>MALONYLATION AT LYS-117</scope>
</reference>
<reference key="17">
    <citation type="journal article" date="2012" name="Proc. Natl. Acad. Sci. U.S.A.">
        <title>N-terminal acetylome analyses and functional insights of the N-terminal acetyltransferase NatB.</title>
        <authorList>
            <person name="Van Damme P."/>
            <person name="Lasa M."/>
            <person name="Polevoda B."/>
            <person name="Gazquez C."/>
            <person name="Elosegui-Artola A."/>
            <person name="Kim D.S."/>
            <person name="De Juan-Pardo E."/>
            <person name="Demeyer K."/>
            <person name="Hole K."/>
            <person name="Larrea E."/>
            <person name="Timmerman E."/>
            <person name="Prieto J."/>
            <person name="Arnesen T."/>
            <person name="Sherman F."/>
            <person name="Gevaert K."/>
            <person name="Aldabe R."/>
        </authorList>
    </citation>
    <scope>IDENTIFICATION BY MASS SPECTROMETRY [LARGE SCALE ANALYSIS]</scope>
</reference>
<reference key="18">
    <citation type="journal article" date="2013" name="Genes Dev.">
        <title>USP49 deubiquitinates histone H2B and regulates cotranscriptional pre-mRNA splicing.</title>
        <authorList>
            <person name="Zhang Z."/>
            <person name="Jones A."/>
            <person name="Joo H.Y."/>
            <person name="Zhou D."/>
            <person name="Cao Y."/>
            <person name="Chen S."/>
            <person name="Erdjument-Bromage H."/>
            <person name="Renfrow M."/>
            <person name="He H."/>
            <person name="Tempst P."/>
            <person name="Townes T.M."/>
            <person name="Giles K.E."/>
            <person name="Ma L."/>
            <person name="Wang H."/>
        </authorList>
    </citation>
    <scope>UBIQUITINATION</scope>
    <scope>DEUBIQUITINATION BY USP49</scope>
</reference>
<reference key="19">
    <citation type="journal article" date="2014" name="Nat. Chem. Biol.">
        <title>Lysine 2-hydroxyisobutyrylation is a widely distributed active histone mark.</title>
        <authorList>
            <person name="Dai L."/>
            <person name="Peng C."/>
            <person name="Montellier E."/>
            <person name="Lu Z."/>
            <person name="Chen Y."/>
            <person name="Ishii H."/>
            <person name="Debernardi A."/>
            <person name="Buchou T."/>
            <person name="Rousseaux S."/>
            <person name="Jin F."/>
            <person name="Sabari B.R."/>
            <person name="Deng Z."/>
            <person name="Allis C.D."/>
            <person name="Ren B."/>
            <person name="Khochbin S."/>
            <person name="Zhao Y."/>
        </authorList>
    </citation>
    <scope>HYDROXYBUTYRYLATION AT LYS-6; LYS-13; LYS-21; LYS-24; LYS-25; LYS-35; LYS-44; LYS-47; LYS-58; LYS-86; LYS-109; LYS-117 AND LYS-121</scope>
</reference>
<reference key="20">
    <citation type="journal article" date="2015" name="Mol. Cell. Proteomics">
        <title>System-wide analysis of SUMOylation dynamics in response to replication stress reveals novel small ubiquitin-like modified target proteins and acceptor lysines relevant for genome stability.</title>
        <authorList>
            <person name="Xiao Z."/>
            <person name="Chang J.G."/>
            <person name="Hendriks I.A."/>
            <person name="Sigurdsson J.O."/>
            <person name="Olsen J.V."/>
            <person name="Vertegaal A.C."/>
        </authorList>
    </citation>
    <scope>SUMOYLATION [LARGE SCALE ANALYSIS] AT LYS-6</scope>
    <scope>IDENTIFICATION BY MASS SPECTROMETRY [LARGE SCALE ANALYSIS]</scope>
</reference>
<reference key="21">
    <citation type="journal article" date="2016" name="Mol. Cell">
        <title>Dynamic competing histone H4 K5K8 acetylation and butyrylation are hallmarks of highly active gene promoters.</title>
        <authorList>
            <person name="Goudarzi A."/>
            <person name="Zhang D."/>
            <person name="Huang H."/>
            <person name="Barral S."/>
            <person name="Kwon O.K."/>
            <person name="Qi S."/>
            <person name="Tang Z."/>
            <person name="Buchou T."/>
            <person name="Vitte A.L."/>
            <person name="He T."/>
            <person name="Cheng Z."/>
            <person name="Montellier E."/>
            <person name="Gaucher J."/>
            <person name="Curtet S."/>
            <person name="Debernardi A."/>
            <person name="Charbonnier G."/>
            <person name="Puthier D."/>
            <person name="Petosa C."/>
            <person name="Panne D."/>
            <person name="Rousseaux S."/>
            <person name="Roeder R.G."/>
            <person name="Zhao Y."/>
            <person name="Khochbin S."/>
        </authorList>
    </citation>
    <scope>BUTYRYLATION AT LYS-6 AND LYS-21</scope>
</reference>
<reference key="22">
    <citation type="journal article" date="2016" name="Mol. Cell">
        <title>Metabolic regulation of gene expression by histone lysine beta-hydroxybutyrylation.</title>
        <authorList>
            <person name="Xie Z."/>
            <person name="Zhang D."/>
            <person name="Chung D."/>
            <person name="Tang Z."/>
            <person name="Huang H."/>
            <person name="Dai L."/>
            <person name="Qi S."/>
            <person name="Li J."/>
            <person name="Colak G."/>
            <person name="Chen Y."/>
            <person name="Xia C."/>
            <person name="Peng C."/>
            <person name="Ruan H."/>
            <person name="Kirkey M."/>
            <person name="Wang D."/>
            <person name="Jensen L.M."/>
            <person name="Kwon O.K."/>
            <person name="Lee S."/>
            <person name="Pletcher S.D."/>
            <person name="Tan M."/>
            <person name="Lombard D.B."/>
            <person name="White K.P."/>
            <person name="Zhao H."/>
            <person name="Li J."/>
            <person name="Roeder R.G."/>
            <person name="Yang X."/>
            <person name="Zhao Y."/>
        </authorList>
    </citation>
    <scope>HYDROXYBUTYRYLATION AT LYS-6; LYS-12; LYS-17; LYS-21; LYS-35; LYS-86; LYS-117 AND LYS-121</scope>
</reference>
<reference key="23">
    <citation type="journal article" date="2016" name="Nat. Chem. Biol.">
        <title>Serine is a new target residue for endogenous ADP-ribosylation on histones.</title>
        <authorList>
            <person name="Leidecker O."/>
            <person name="Bonfiglio J.J."/>
            <person name="Colby T."/>
            <person name="Zhang Q."/>
            <person name="Atanassov I."/>
            <person name="Zaja R."/>
            <person name="Palazzo L."/>
            <person name="Stockum A."/>
            <person name="Ahel I."/>
            <person name="Matic I."/>
        </authorList>
    </citation>
    <scope>ADP-RIBOSYLATION AT SER-7</scope>
</reference>
<reference key="24">
    <citation type="journal article" date="2017" name="Nat. Struct. Mol. Biol.">
        <title>Site-specific mapping of the human SUMO proteome reveals co-modification with phosphorylation.</title>
        <authorList>
            <person name="Hendriks I.A."/>
            <person name="Lyon D."/>
            <person name="Young C."/>
            <person name="Jensen L.J."/>
            <person name="Vertegaal A.C."/>
            <person name="Nielsen M.L."/>
        </authorList>
    </citation>
    <scope>SUMOYLATION [LARGE SCALE ANALYSIS] AT LYS-6</scope>
    <scope>IDENTIFICATION BY MASS SPECTROMETRY [LARGE SCALE ANALYSIS]</scope>
</reference>
<reference key="25">
    <citation type="journal article" date="2016" name="Nat. Commun.">
        <title>PARP3 is a sensor of nicked nucleosomes and monoribosylates histone H2B(Glu2).</title>
        <authorList>
            <person name="Grundy G.J."/>
            <person name="Polo L.M."/>
            <person name="Zeng Z."/>
            <person name="Rulten S.L."/>
            <person name="Hoch N.C."/>
            <person name="Paomephan P."/>
            <person name="Xu Y."/>
            <person name="Sweet S.M."/>
            <person name="Thorne A.W."/>
            <person name="Oliver A.W."/>
            <person name="Matthews S.J."/>
            <person name="Pearl L.H."/>
            <person name="Caldecott K.W."/>
        </authorList>
    </citation>
    <scope>ADP-RIBOSYLATION AT GLU-3</scope>
</reference>
<reference key="26">
    <citation type="journal article" date="2019" name="Mol. Cell">
        <title>Glutarylation of histone H4 lysine 91 regulates chromatin dynamics.</title>
        <authorList>
            <person name="Bao X."/>
            <person name="Liu Z."/>
            <person name="Zhang W."/>
            <person name="Gladysz K."/>
            <person name="Fung Y.M.E."/>
            <person name="Tian G."/>
            <person name="Xiong Y."/>
            <person name="Wong J.W.H."/>
            <person name="Yuen K.W.Y."/>
            <person name="Li X.D."/>
        </authorList>
    </citation>
    <scope>GLUTARYLATION AT LYS-17; LYS-35; LYS-44; LYS-47; LYS-109; LYS-117 AND LYS-121</scope>
</reference>
<reference key="27">
    <citation type="journal article" date="2019" name="Nature">
        <title>Metabolic regulation of gene expression by histone lactylation.</title>
        <authorList>
            <person name="Zhang D."/>
            <person name="Tang Z."/>
            <person name="Huang H."/>
            <person name="Zhou G."/>
            <person name="Cui C."/>
            <person name="Weng Y."/>
            <person name="Liu W."/>
            <person name="Kim S."/>
            <person name="Lee S."/>
            <person name="Perez-Neut M."/>
            <person name="Ding J."/>
            <person name="Czyz D."/>
            <person name="Hu R."/>
            <person name="Ye Z."/>
            <person name="He M."/>
            <person name="Zheng Y.G."/>
            <person name="Shuman H.A."/>
            <person name="Dai L."/>
            <person name="Ren B."/>
            <person name="Roeder R.G."/>
            <person name="Becker L."/>
            <person name="Zhao Y."/>
        </authorList>
    </citation>
    <scope>LACTYLATION AT LYS-6; LYS-12; LYS-16; LYS-17; LYS-21; LYS-24; LYS-44; LYS-86; LYS-109; LYS-117 AND LYS-121</scope>
</reference>
<reference key="28">
    <citation type="journal article" date="2021" name="Elife">
        <title>Serine ADP-ribosylation marks nucleosomes for ALC1-dependent chromatin remodeling.</title>
        <authorList>
            <person name="Mohapatra J."/>
            <person name="Tashiro K."/>
            <person name="Beckner R.L."/>
            <person name="Sierra J."/>
            <person name="Kilgore J.A."/>
            <person name="Williams N.S."/>
            <person name="Liszczak G."/>
        </authorList>
    </citation>
    <scope>ADP-RIBOSYLATION AT SER-7</scope>
</reference>
<protein>
    <recommendedName>
        <fullName>Histone H2B type 1-D</fullName>
    </recommendedName>
    <alternativeName>
        <fullName evidence="27">H2B-clustered histone 5</fullName>
    </alternativeName>
    <alternativeName>
        <fullName>HIRA-interacting protein 2</fullName>
    </alternativeName>
    <alternativeName>
        <fullName>Histone H2B.1 B</fullName>
    </alternativeName>
    <alternativeName>
        <fullName>Histone H2B.b</fullName>
        <shortName>H2B/b</shortName>
    </alternativeName>
</protein>
<feature type="initiator methionine" description="Removed" evidence="1">
    <location>
        <position position="1"/>
    </location>
</feature>
<feature type="chain" id="PRO_0000071827" description="Histone H2B type 1-D">
    <location>
        <begin position="2"/>
        <end position="126"/>
    </location>
</feature>
<feature type="region of interest" description="Disordered" evidence="9">
    <location>
        <begin position="1"/>
        <end position="36"/>
    </location>
</feature>
<feature type="compositionally biased region" description="Low complexity" evidence="9">
    <location>
        <begin position="1"/>
        <end position="12"/>
    </location>
</feature>
<feature type="modified residue" description="N-acetylproline" evidence="1">
    <location>
        <position position="2"/>
    </location>
</feature>
<feature type="modified residue" description="ADP-ribosyl glutamic acid" evidence="21">
    <location>
        <position position="3"/>
    </location>
</feature>
<feature type="modified residue" description="N6-(2-hydroxyisobutyryl)lysine; alternate" evidence="18">
    <location>
        <position position="6"/>
    </location>
</feature>
<feature type="modified residue" description="N6-(beta-hydroxybutyryl)lysine; alternate" evidence="20">
    <location>
        <position position="6"/>
    </location>
</feature>
<feature type="modified residue" description="N6-acetyllysine; alternate" evidence="11 13 28">
    <location>
        <position position="6"/>
    </location>
</feature>
<feature type="modified residue" description="N6-butyryllysine; alternate" evidence="19">
    <location>
        <position position="6"/>
    </location>
</feature>
<feature type="modified residue" description="N6-crotonyllysine; alternate" evidence="16">
    <location>
        <position position="6"/>
    </location>
</feature>
<feature type="modified residue" description="N6-lactoyllysine; alternate" evidence="24">
    <location>
        <position position="6"/>
    </location>
</feature>
<feature type="modified residue" description="ADP-ribosylserine" evidence="22 25">
    <location>
        <position position="7"/>
    </location>
</feature>
<feature type="modified residue" description="N6-(beta-hydroxybutyryl)lysine; alternate" evidence="20">
    <location>
        <position position="12"/>
    </location>
</feature>
<feature type="modified residue" description="N6-acetyllysine; alternate" evidence="13">
    <location>
        <position position="12"/>
    </location>
</feature>
<feature type="modified residue" description="N6-crotonyllysine; alternate" evidence="16">
    <location>
        <position position="12"/>
    </location>
</feature>
<feature type="modified residue" description="N6-lactoyllysine; alternate" evidence="24">
    <location>
        <position position="12"/>
    </location>
</feature>
<feature type="modified residue" description="N6-(2-hydroxyisobutyryl)lysine; alternate" evidence="18">
    <location>
        <position position="13"/>
    </location>
</feature>
<feature type="modified residue" description="N6-acetyllysine; alternate" evidence="11 13">
    <location>
        <position position="13"/>
    </location>
</feature>
<feature type="modified residue" description="N6-crotonyllysine; alternate" evidence="16">
    <location>
        <position position="13"/>
    </location>
</feature>
<feature type="modified residue" description="Phosphoserine; by STK4/MST1" evidence="10">
    <location>
        <position position="15"/>
    </location>
</feature>
<feature type="modified residue" description="N6-acetyllysine; alternate" evidence="11 13">
    <location>
        <position position="16"/>
    </location>
</feature>
<feature type="modified residue" description="N6-crotonyllysine; alternate" evidence="16">
    <location>
        <position position="16"/>
    </location>
</feature>
<feature type="modified residue" description="N6-lactoyllysine; alternate" evidence="24">
    <location>
        <position position="16"/>
    </location>
</feature>
<feature type="modified residue" description="N6-(beta-hydroxybutyryl)lysine; alternate" evidence="20">
    <location>
        <position position="17"/>
    </location>
</feature>
<feature type="modified residue" description="N6-acetyllysine; alternate" evidence="13">
    <location>
        <position position="17"/>
    </location>
</feature>
<feature type="modified residue" description="N6-crotonyllysine; alternate" evidence="16">
    <location>
        <position position="17"/>
    </location>
</feature>
<feature type="modified residue" description="N6-glutaryllysine; alternate" evidence="23">
    <location>
        <position position="17"/>
    </location>
</feature>
<feature type="modified residue" description="N6-lactoyllysine; alternate" evidence="24">
    <location>
        <position position="17"/>
    </location>
</feature>
<feature type="modified residue" description="N6-(2-hydroxyisobutyryl)lysine; alternate" evidence="18">
    <location>
        <position position="21"/>
    </location>
</feature>
<feature type="modified residue" description="N6-(beta-hydroxybutyryl)lysine; alternate" evidence="20">
    <location>
        <position position="21"/>
    </location>
</feature>
<feature type="modified residue" description="N6-acetyllysine; alternate" evidence="11 13">
    <location>
        <position position="21"/>
    </location>
</feature>
<feature type="modified residue" description="N6-butyryllysine; alternate" evidence="19">
    <location>
        <position position="21"/>
    </location>
</feature>
<feature type="modified residue" description="N6-crotonyllysine; alternate" evidence="16">
    <location>
        <position position="21"/>
    </location>
</feature>
<feature type="modified residue" description="N6-lactoyllysine; alternate" evidence="24">
    <location>
        <position position="21"/>
    </location>
</feature>
<feature type="modified residue" description="N6-(2-hydroxyisobutyryl)lysine; alternate" evidence="18">
    <location>
        <position position="24"/>
    </location>
</feature>
<feature type="modified residue" description="N6-acetyllysine; alternate" evidence="2">
    <location>
        <position position="24"/>
    </location>
</feature>
<feature type="modified residue" description="N6-crotonyllysine; alternate" evidence="16">
    <location>
        <position position="24"/>
    </location>
</feature>
<feature type="modified residue" description="N6-lactoyllysine; alternate" evidence="24">
    <location>
        <position position="24"/>
    </location>
</feature>
<feature type="modified residue" description="N6-(2-hydroxyisobutyryl)lysine" evidence="18">
    <location>
        <position position="25"/>
    </location>
</feature>
<feature type="modified residue" description="N6-(2-hydroxyisobutyryl)lysine; alternate" evidence="18">
    <location>
        <position position="35"/>
    </location>
</feature>
<feature type="modified residue" description="N6-(beta-hydroxybutyryl)lysine; alternate" evidence="20">
    <location>
        <position position="35"/>
    </location>
</feature>
<feature type="modified residue" description="N6-crotonyllysine; alternate" evidence="16">
    <location>
        <position position="35"/>
    </location>
</feature>
<feature type="modified residue" description="N6-glutaryllysine; alternate" evidence="23">
    <location>
        <position position="35"/>
    </location>
</feature>
<feature type="modified residue" description="N6-succinyllysine; alternate" evidence="17">
    <location>
        <position position="35"/>
    </location>
</feature>
<feature type="modified residue" description="PolyADP-ribosyl glutamic acid" evidence="6">
    <location>
        <position position="36"/>
    </location>
</feature>
<feature type="modified residue" description="Phosphoserine; by AMPK" evidence="6">
    <location>
        <position position="37"/>
    </location>
</feature>
<feature type="modified residue" description="N6-(2-hydroxyisobutyryl)lysine; alternate" evidence="18">
    <location>
        <position position="44"/>
    </location>
</feature>
<feature type="modified residue" description="N6-glutaryllysine; alternate" evidence="23">
    <location>
        <position position="44"/>
    </location>
</feature>
<feature type="modified residue" description="N6-lactoyllysine; alternate" evidence="24">
    <location>
        <position position="44"/>
    </location>
</feature>
<feature type="modified residue" description="N6-(2-hydroxyisobutyryl)lysine; alternate" evidence="18">
    <location>
        <position position="47"/>
    </location>
</feature>
<feature type="modified residue" description="N6-glutaryllysine; alternate" evidence="23">
    <location>
        <position position="47"/>
    </location>
</feature>
<feature type="modified residue" description="N6-methyllysine; alternate" evidence="13">
    <location>
        <position position="47"/>
    </location>
</feature>
<feature type="modified residue" description="N6,N6-dimethyllysine; alternate" evidence="13">
    <location>
        <position position="58"/>
    </location>
</feature>
<feature type="modified residue" description="N6-(2-hydroxyisobutyryl)lysine; alternate" evidence="18">
    <location>
        <position position="58"/>
    </location>
</feature>
<feature type="modified residue" description="Dimethylated arginine" evidence="8">
    <location>
        <position position="80"/>
    </location>
</feature>
<feature type="modified residue" description="N6,N6,N6-trimethyllysine; alternate" evidence="8">
    <location>
        <position position="86"/>
    </location>
</feature>
<feature type="modified residue" description="N6-(2-hydroxyisobutyryl)lysine; alternate" evidence="18">
    <location>
        <position position="86"/>
    </location>
</feature>
<feature type="modified residue" description="N6-(beta-hydroxybutyryl)lysine; alternate" evidence="20">
    <location>
        <position position="86"/>
    </location>
</feature>
<feature type="modified residue" description="N6-acetyllysine; alternate" evidence="8">
    <location>
        <position position="86"/>
    </location>
</feature>
<feature type="modified residue" description="N6-lactoyllysine; alternate" evidence="24">
    <location>
        <position position="86"/>
    </location>
</feature>
<feature type="modified residue" description="Omega-N-methylarginine" evidence="8">
    <location>
        <position position="87"/>
    </location>
</feature>
<feature type="modified residue" description="Omega-N-methylarginine" evidence="8">
    <location>
        <position position="93"/>
    </location>
</feature>
<feature type="modified residue" description="N6-(2-hydroxyisobutyryl)lysine; alternate" evidence="18">
    <location>
        <position position="109"/>
    </location>
</feature>
<feature type="modified residue" description="N6-glutaryllysine; alternate" evidence="23">
    <location>
        <position position="109"/>
    </location>
</feature>
<feature type="modified residue" description="N6-lactoyllysine; alternate" evidence="24">
    <location>
        <position position="109"/>
    </location>
</feature>
<feature type="modified residue" description="N6-methyllysine; alternate" evidence="13">
    <location>
        <position position="109"/>
    </location>
</feature>
<feature type="modified residue" description="Phosphothreonine" evidence="4">
    <location>
        <position position="116"/>
    </location>
</feature>
<feature type="modified residue" description="N6-(2-hydroxyisobutyryl)lysine; alternate" evidence="18">
    <location>
        <position position="117"/>
    </location>
</feature>
<feature type="modified residue" description="N6-(beta-hydroxybutyryl)lysine; alternate" evidence="20">
    <location>
        <position position="117"/>
    </location>
</feature>
<feature type="modified residue" description="N6-glutaryllysine; alternate" evidence="23">
    <location>
        <position position="117"/>
    </location>
</feature>
<feature type="modified residue" description="N6-lactoyllysine; alternate" evidence="24">
    <location>
        <position position="117"/>
    </location>
</feature>
<feature type="modified residue" description="N6-malonyllysine; alternate" evidence="17">
    <location>
        <position position="117"/>
    </location>
</feature>
<feature type="modified residue" description="N6-methylated lysine; alternate" evidence="4">
    <location>
        <position position="117"/>
    </location>
</feature>
<feature type="modified residue" description="N6-succinyllysine; alternate" evidence="17">
    <location>
        <position position="117"/>
    </location>
</feature>
<feature type="modified residue" description="N6-(2-hydroxyisobutyryl)lysine; alternate" evidence="18">
    <location>
        <position position="121"/>
    </location>
</feature>
<feature type="modified residue" description="N6-(beta-hydroxybutyryl)lysine; alternate" evidence="20">
    <location>
        <position position="121"/>
    </location>
</feature>
<feature type="modified residue" description="N6-glutaryllysine; alternate" evidence="23">
    <location>
        <position position="121"/>
    </location>
</feature>
<feature type="modified residue" description="N6-lactoyllysine; alternate" evidence="24">
    <location>
        <position position="121"/>
    </location>
</feature>
<feature type="modified residue" description="N6-succinyllysine; alternate" evidence="17">
    <location>
        <position position="121"/>
    </location>
</feature>
<feature type="glycosylation site" description="O-linked (GlcNAc) serine" evidence="3">
    <location>
        <position position="113"/>
    </location>
</feature>
<feature type="cross-link" description="Glycyl lysine isopeptide (Lys-Gly) (interchain with G-Cter in SUMO2); alternate" evidence="29 30">
    <location>
        <position position="6"/>
    </location>
</feature>
<feature type="cross-link" description="Glycyl lysine isopeptide (Lys-Gly) (interchain with G-Cter in SUMO2); alternate" evidence="5">
    <location>
        <position position="21"/>
    </location>
</feature>
<feature type="cross-link" description="Glycyl lysine isopeptide (Lys-Gly) (interchain with G-Cter in ubiquitin); alternate" evidence="15">
    <location>
        <position position="35"/>
    </location>
</feature>
<feature type="cross-link" description="Glycyl lysine isopeptide (Lys-Gly) (interchain with G-Cter in ubiquitin); alternate" evidence="12 13 14">
    <location>
        <position position="121"/>
    </location>
</feature>
<proteinExistence type="evidence at protein level"/>
<dbReference type="EMBL" id="AJ223353">
    <property type="protein sequence ID" value="CAA11277.1"/>
    <property type="molecule type" value="mRNA"/>
</dbReference>
<dbReference type="EMBL" id="M60751">
    <property type="protein sequence ID" value="AAA63190.1"/>
    <property type="molecule type" value="Genomic_DNA"/>
</dbReference>
<dbReference type="EMBL" id="AF531287">
    <property type="protein sequence ID" value="AAN06687.1"/>
    <property type="molecule type" value="Genomic_DNA"/>
</dbReference>
<dbReference type="EMBL" id="AL353759">
    <property type="status" value="NOT_ANNOTATED_CDS"/>
    <property type="molecule type" value="Genomic_DNA"/>
</dbReference>
<dbReference type="EMBL" id="BC002842">
    <property type="protein sequence ID" value="AAH02842.1"/>
    <property type="molecule type" value="mRNA"/>
</dbReference>
<dbReference type="CCDS" id="CCDS4587.1"/>
<dbReference type="PIR" id="F40335">
    <property type="entry name" value="F40335"/>
</dbReference>
<dbReference type="RefSeq" id="NP_066407.1">
    <property type="nucleotide sequence ID" value="NM_021063.4"/>
</dbReference>
<dbReference type="RefSeq" id="NP_619790.1">
    <property type="nucleotide sequence ID" value="NM_138720.2"/>
</dbReference>
<dbReference type="RefSeq" id="XP_005249096.2">
    <property type="nucleotide sequence ID" value="XM_005249039.5"/>
</dbReference>
<dbReference type="SMR" id="P58876"/>
<dbReference type="BioGRID" id="109270">
    <property type="interactions" value="336"/>
</dbReference>
<dbReference type="FunCoup" id="P58876">
    <property type="interactions" value="1533"/>
</dbReference>
<dbReference type="IntAct" id="P58876">
    <property type="interactions" value="77"/>
</dbReference>
<dbReference type="MINT" id="P58876"/>
<dbReference type="STRING" id="9606.ENSP00000289316"/>
<dbReference type="GlyCosmos" id="P58876">
    <property type="glycosylation" value="1 site, No reported glycans"/>
</dbReference>
<dbReference type="GlyGen" id="P58876">
    <property type="glycosylation" value="4 sites, 1 O-linked glycan (3 sites)"/>
</dbReference>
<dbReference type="iPTMnet" id="P58876"/>
<dbReference type="PhosphoSitePlus" id="P58876"/>
<dbReference type="SwissPalm" id="P58876"/>
<dbReference type="BioMuta" id="HIST1H2BD"/>
<dbReference type="DMDM" id="21542074"/>
<dbReference type="jPOST" id="P58876"/>
<dbReference type="MassIVE" id="P58876"/>
<dbReference type="PaxDb" id="9606-ENSP00000289316"/>
<dbReference type="PeptideAtlas" id="P58876"/>
<dbReference type="PRIDE" id="P58876"/>
<dbReference type="ProteomicsDB" id="57105"/>
<dbReference type="Pumba" id="P58876"/>
<dbReference type="TopDownProteomics" id="P58876"/>
<dbReference type="Antibodypedia" id="53616">
    <property type="antibodies" value="142 antibodies from 18 providers"/>
</dbReference>
<dbReference type="DNASU" id="3017"/>
<dbReference type="Ensembl" id="ENST00000289316.2">
    <property type="protein sequence ID" value="ENSP00000289316.2"/>
    <property type="gene ID" value="ENSG00000158373.9"/>
</dbReference>
<dbReference type="Ensembl" id="ENST00000377777.6">
    <property type="protein sequence ID" value="ENSP00000367008.4"/>
    <property type="gene ID" value="ENSG00000158373.9"/>
</dbReference>
<dbReference type="GeneID" id="3017"/>
<dbReference type="KEGG" id="hsa:3017"/>
<dbReference type="MANE-Select" id="ENST00000377777.6">
    <property type="protein sequence ID" value="ENSP00000367008.4"/>
    <property type="RefSeq nucleotide sequence ID" value="NM_021063.4"/>
    <property type="RefSeq protein sequence ID" value="NP_066407.1"/>
</dbReference>
<dbReference type="UCSC" id="uc003ngr.4">
    <property type="organism name" value="human"/>
</dbReference>
<dbReference type="AGR" id="HGNC:4747"/>
<dbReference type="CTD" id="3017"/>
<dbReference type="DisGeNET" id="3017"/>
<dbReference type="GeneCards" id="H2BC5"/>
<dbReference type="HGNC" id="HGNC:4747">
    <property type="gene designation" value="H2BC5"/>
</dbReference>
<dbReference type="HPA" id="ENSG00000158373">
    <property type="expression patterns" value="Low tissue specificity"/>
</dbReference>
<dbReference type="MalaCards" id="H2BC5"/>
<dbReference type="MIM" id="602799">
    <property type="type" value="gene"/>
</dbReference>
<dbReference type="neXtProt" id="NX_P58876"/>
<dbReference type="OpenTargets" id="ENSG00000158373"/>
<dbReference type="VEuPathDB" id="HostDB:ENSG00000158373"/>
<dbReference type="eggNOG" id="KOG1744">
    <property type="taxonomic scope" value="Eukaryota"/>
</dbReference>
<dbReference type="GeneTree" id="ENSGT01110000267152"/>
<dbReference type="HOGENOM" id="CLU_075666_2_1_1"/>
<dbReference type="InParanoid" id="P58876"/>
<dbReference type="OMA" id="HILFRHI"/>
<dbReference type="OrthoDB" id="9537006at2759"/>
<dbReference type="PAN-GO" id="P58876">
    <property type="GO annotations" value="2 GO annotations based on evolutionary models"/>
</dbReference>
<dbReference type="PhylomeDB" id="P58876"/>
<dbReference type="TreeFam" id="TF300212"/>
<dbReference type="PathwayCommons" id="P58876"/>
<dbReference type="Reactome" id="R-HSA-110328">
    <property type="pathway name" value="Recognition and association of DNA glycosylase with site containing an affected pyrimidine"/>
</dbReference>
<dbReference type="Reactome" id="R-HSA-110329">
    <property type="pathway name" value="Cleavage of the damaged pyrimidine"/>
</dbReference>
<dbReference type="Reactome" id="R-HSA-110330">
    <property type="pathway name" value="Recognition and association of DNA glycosylase with site containing an affected purine"/>
</dbReference>
<dbReference type="Reactome" id="R-HSA-110331">
    <property type="pathway name" value="Cleavage of the damaged purine"/>
</dbReference>
<dbReference type="Reactome" id="R-HSA-1221632">
    <property type="pathway name" value="Meiotic synapsis"/>
</dbReference>
<dbReference type="Reactome" id="R-HSA-171306">
    <property type="pathway name" value="Packaging Of Telomere Ends"/>
</dbReference>
<dbReference type="Reactome" id="R-HSA-1912408">
    <property type="pathway name" value="Pre-NOTCH Transcription and Translation"/>
</dbReference>
<dbReference type="Reactome" id="R-HSA-201722">
    <property type="pathway name" value="Formation of the beta-catenin:TCF transactivating complex"/>
</dbReference>
<dbReference type="Reactome" id="R-HSA-212300">
    <property type="pathway name" value="PRC2 methylates histones and DNA"/>
</dbReference>
<dbReference type="Reactome" id="R-HSA-2299718">
    <property type="pathway name" value="Condensation of Prophase Chromosomes"/>
</dbReference>
<dbReference type="Reactome" id="R-HSA-2559580">
    <property type="pathway name" value="Oxidative Stress Induced Senescence"/>
</dbReference>
<dbReference type="Reactome" id="R-HSA-2559582">
    <property type="pathway name" value="Senescence-Associated Secretory Phenotype (SASP)"/>
</dbReference>
<dbReference type="Reactome" id="R-HSA-2559586">
    <property type="pathway name" value="DNA Damage/Telomere Stress Induced Senescence"/>
</dbReference>
<dbReference type="Reactome" id="R-HSA-3214815">
    <property type="pathway name" value="HDACs deacetylate histones"/>
</dbReference>
<dbReference type="Reactome" id="R-HSA-3214847">
    <property type="pathway name" value="HATs acetylate histones"/>
</dbReference>
<dbReference type="Reactome" id="R-HSA-427359">
    <property type="pathway name" value="SIRT1 negatively regulates rRNA expression"/>
</dbReference>
<dbReference type="Reactome" id="R-HSA-427389">
    <property type="pathway name" value="ERCC6 (CSB) and EHMT2 (G9a) positively regulate rRNA expression"/>
</dbReference>
<dbReference type="Reactome" id="R-HSA-427413">
    <property type="pathway name" value="NoRC negatively regulates rRNA expression"/>
</dbReference>
<dbReference type="Reactome" id="R-HSA-5250924">
    <property type="pathway name" value="B-WICH complex positively regulates rRNA expression"/>
</dbReference>
<dbReference type="Reactome" id="R-HSA-5334118">
    <property type="pathway name" value="DNA methylation"/>
</dbReference>
<dbReference type="Reactome" id="R-HSA-5578749">
    <property type="pathway name" value="Transcriptional regulation by small RNAs"/>
</dbReference>
<dbReference type="Reactome" id="R-HSA-5617472">
    <property type="pathway name" value="Activation of anterior HOX genes in hindbrain development during early embryogenesis"/>
</dbReference>
<dbReference type="Reactome" id="R-HSA-5625886">
    <property type="pathway name" value="Activated PKN1 stimulates transcription of AR (androgen receptor) regulated genes KLK2 and KLK3"/>
</dbReference>
<dbReference type="Reactome" id="R-HSA-5689880">
    <property type="pathway name" value="Ub-specific processing proteases"/>
</dbReference>
<dbReference type="Reactome" id="R-HSA-5693565">
    <property type="pathway name" value="Recruitment and ATM-mediated phosphorylation of repair and signaling proteins at DNA double strand breaks"/>
</dbReference>
<dbReference type="Reactome" id="R-HSA-5693571">
    <property type="pathway name" value="Nonhomologous End-Joining (NHEJ)"/>
</dbReference>
<dbReference type="Reactome" id="R-HSA-5693607">
    <property type="pathway name" value="Processing of DNA double-strand break ends"/>
</dbReference>
<dbReference type="Reactome" id="R-HSA-606279">
    <property type="pathway name" value="Deposition of new CENPA-containing nucleosomes at the centromere"/>
</dbReference>
<dbReference type="Reactome" id="R-HSA-68616">
    <property type="pathway name" value="Assembly of the ORC complex at the origin of replication"/>
</dbReference>
<dbReference type="Reactome" id="R-HSA-69473">
    <property type="pathway name" value="G2/M DNA damage checkpoint"/>
</dbReference>
<dbReference type="Reactome" id="R-HSA-73728">
    <property type="pathway name" value="RNA Polymerase I Promoter Opening"/>
</dbReference>
<dbReference type="Reactome" id="R-HSA-73772">
    <property type="pathway name" value="RNA Polymerase I Promoter Escape"/>
</dbReference>
<dbReference type="Reactome" id="R-HSA-8866654">
    <property type="pathway name" value="E3 ubiquitin ligases ubiquitinate target proteins"/>
</dbReference>
<dbReference type="Reactome" id="R-HSA-8936459">
    <property type="pathway name" value="RUNX1 regulates genes involved in megakaryocyte differentiation and platelet function"/>
</dbReference>
<dbReference type="Reactome" id="R-HSA-8939236">
    <property type="pathway name" value="RUNX1 regulates transcription of genes involved in differentiation of HSCs"/>
</dbReference>
<dbReference type="Reactome" id="R-HSA-9018519">
    <property type="pathway name" value="Estrogen-dependent gene expression"/>
</dbReference>
<dbReference type="Reactome" id="R-HSA-912446">
    <property type="pathway name" value="Meiotic recombination"/>
</dbReference>
<dbReference type="Reactome" id="R-HSA-9609690">
    <property type="pathway name" value="HCMV Early Events"/>
</dbReference>
<dbReference type="Reactome" id="R-HSA-9610379">
    <property type="pathway name" value="HCMV Late Events"/>
</dbReference>
<dbReference type="Reactome" id="R-HSA-9616222">
    <property type="pathway name" value="Transcriptional regulation of granulopoiesis"/>
</dbReference>
<dbReference type="Reactome" id="R-HSA-9670095">
    <property type="pathway name" value="Inhibition of DNA recombination at telomere"/>
</dbReference>
<dbReference type="Reactome" id="R-HSA-9710421">
    <property type="pathway name" value="Defective pyroptosis"/>
</dbReference>
<dbReference type="Reactome" id="R-HSA-977225">
    <property type="pathway name" value="Amyloid fiber formation"/>
</dbReference>
<dbReference type="Reactome" id="R-HSA-9821002">
    <property type="pathway name" value="Chromatin modifications during the maternal to zygotic transition (MZT)"/>
</dbReference>
<dbReference type="Reactome" id="R-HSA-9821993">
    <property type="pathway name" value="Replacement of protamines by nucleosomes in the male pronucleus"/>
</dbReference>
<dbReference type="Reactome" id="R-HSA-9841922">
    <property type="pathway name" value="MLL4 and MLL3 complexes regulate expression of PPARG target genes in adipogenesis and hepatic steatosis"/>
</dbReference>
<dbReference type="Reactome" id="R-HSA-9843940">
    <property type="pathway name" value="Regulation of endogenous retroelements by KRAB-ZFP proteins"/>
</dbReference>
<dbReference type="Reactome" id="R-HSA-9843970">
    <property type="pathway name" value="Regulation of endogenous retroelements by the Human Silencing Hub (HUSH) complex"/>
</dbReference>
<dbReference type="Reactome" id="R-HSA-9845323">
    <property type="pathway name" value="Regulation of endogenous retroelements by Piwi-interacting RNAs (piRNAs)"/>
</dbReference>
<dbReference type="SignaLink" id="P58876"/>
<dbReference type="SIGNOR" id="P58876"/>
<dbReference type="BioGRID-ORCS" id="3017">
    <property type="hits" value="141 hits in 1098 CRISPR screens"/>
</dbReference>
<dbReference type="CD-CODE" id="91857CE7">
    <property type="entry name" value="Nucleolus"/>
</dbReference>
<dbReference type="ChiTaRS" id="HIST1H2BD">
    <property type="organism name" value="human"/>
</dbReference>
<dbReference type="GeneWiki" id="HIST1H2BD"/>
<dbReference type="GenomeRNAi" id="3017"/>
<dbReference type="Pharos" id="P58876">
    <property type="development level" value="Tbio"/>
</dbReference>
<dbReference type="PRO" id="PR:P58876"/>
<dbReference type="Proteomes" id="UP000005640">
    <property type="component" value="Chromosome 6"/>
</dbReference>
<dbReference type="RNAct" id="P58876">
    <property type="molecule type" value="protein"/>
</dbReference>
<dbReference type="Bgee" id="ENSG00000158373">
    <property type="expression patterns" value="Expressed in right uterine tube and 174 other cell types or tissues"/>
</dbReference>
<dbReference type="ExpressionAtlas" id="P58876">
    <property type="expression patterns" value="baseline and differential"/>
</dbReference>
<dbReference type="GO" id="GO:0005829">
    <property type="term" value="C:cytosol"/>
    <property type="evidence" value="ECO:0000314"/>
    <property type="project" value="HPA"/>
</dbReference>
<dbReference type="GO" id="GO:0070062">
    <property type="term" value="C:extracellular exosome"/>
    <property type="evidence" value="ECO:0007005"/>
    <property type="project" value="UniProtKB"/>
</dbReference>
<dbReference type="GO" id="GO:0005654">
    <property type="term" value="C:nucleoplasm"/>
    <property type="evidence" value="ECO:0000314"/>
    <property type="project" value="HPA"/>
</dbReference>
<dbReference type="GO" id="GO:0000786">
    <property type="term" value="C:nucleosome"/>
    <property type="evidence" value="ECO:0007669"/>
    <property type="project" value="UniProtKB-KW"/>
</dbReference>
<dbReference type="GO" id="GO:0005634">
    <property type="term" value="C:nucleus"/>
    <property type="evidence" value="ECO:0000314"/>
    <property type="project" value="UniProtKB"/>
</dbReference>
<dbReference type="GO" id="GO:0003677">
    <property type="term" value="F:DNA binding"/>
    <property type="evidence" value="ECO:0007669"/>
    <property type="project" value="UniProtKB-KW"/>
</dbReference>
<dbReference type="GO" id="GO:0046982">
    <property type="term" value="F:protein heterodimerization activity"/>
    <property type="evidence" value="ECO:0007669"/>
    <property type="project" value="InterPro"/>
</dbReference>
<dbReference type="GO" id="GO:0030527">
    <property type="term" value="F:structural constituent of chromatin"/>
    <property type="evidence" value="ECO:0007669"/>
    <property type="project" value="InterPro"/>
</dbReference>
<dbReference type="CDD" id="cd22910">
    <property type="entry name" value="HFD_H2B"/>
    <property type="match status" value="1"/>
</dbReference>
<dbReference type="FunFam" id="1.10.20.10:FF:000003">
    <property type="entry name" value="Histone H2B"/>
    <property type="match status" value="1"/>
</dbReference>
<dbReference type="Gene3D" id="1.10.20.10">
    <property type="entry name" value="Histone, subunit A"/>
    <property type="match status" value="1"/>
</dbReference>
<dbReference type="InterPro" id="IPR009072">
    <property type="entry name" value="Histone-fold"/>
</dbReference>
<dbReference type="InterPro" id="IPR007125">
    <property type="entry name" value="Histone_H2A/H2B/H3"/>
</dbReference>
<dbReference type="InterPro" id="IPR000558">
    <property type="entry name" value="Histone_H2B"/>
</dbReference>
<dbReference type="InterPro" id="IPR055333">
    <property type="entry name" value="HISTONE_H2B_site"/>
</dbReference>
<dbReference type="PANTHER" id="PTHR23428">
    <property type="entry name" value="HISTONE H2B"/>
    <property type="match status" value="1"/>
</dbReference>
<dbReference type="Pfam" id="PF00125">
    <property type="entry name" value="Histone"/>
    <property type="match status" value="1"/>
</dbReference>
<dbReference type="PRINTS" id="PR00621">
    <property type="entry name" value="HISTONEH2B"/>
</dbReference>
<dbReference type="SMART" id="SM00427">
    <property type="entry name" value="H2B"/>
    <property type="match status" value="1"/>
</dbReference>
<dbReference type="SUPFAM" id="SSF47113">
    <property type="entry name" value="Histone-fold"/>
    <property type="match status" value="1"/>
</dbReference>
<dbReference type="PROSITE" id="PS00357">
    <property type="entry name" value="HISTONE_H2B"/>
    <property type="match status" value="1"/>
</dbReference>
<name>H2B1D_HUMAN</name>
<sequence length="126" mass="13936">MPEPTKSAPAPKKGSKKAVTKAQKKDGKKRKRSRKESYSVYVYKVLKQVHPDTGISSKAMGIMNSFVNDIFERIAGEASRLAHYNKRSTITSREIQTAVRLLLPGELAKHAVSEGTKAVTKYTSSK</sequence>